<keyword id="KW-0067">ATP-binding</keyword>
<keyword id="KW-0315">Glutamine amidotransferase</keyword>
<keyword id="KW-0332">GMP biosynthesis</keyword>
<keyword id="KW-0436">Ligase</keyword>
<keyword id="KW-0547">Nucleotide-binding</keyword>
<keyword id="KW-0658">Purine biosynthesis</keyword>
<evidence type="ECO:0000255" key="1">
    <source>
        <dbReference type="HAMAP-Rule" id="MF_00344"/>
    </source>
</evidence>
<proteinExistence type="inferred from homology"/>
<sequence>MALDIHAHRILILDFGSQYTQLIARRVREIGVYCELHPFDMDEDAIREFAPKGVILAGGPESVHEANSPRCPQAVFDLGVPVFGICYGMQTMAEQLGGKVEGSELREFGYARVDVVGKSRLLDGIEDHIDADGLFGLDVWMSHGDKVTKMPSDFHILASTPSCPIAGMFNDERAYYGVQFHPEVTHTKQGGRILSRFVLDICGCEALWTPSKIAEDAIANIRAQVGTDNVLLGLSGGVDSSVVAALLHKAIGDQLTCVFVDNGLLRLHEGEQVMAMFAENMGVKVIRANAEDQFLNNLAGEADPEKKRKIIGRTFIDVFDAESCKLDNIKYLAQGTIYPDVIESAGAKSGKAHVIKSHHNVGGLPEEMNLKLVEPLRELFKDEVRRLGLELGLPYDMVYRHPFPGPGLGVRILGEVKKEYADLLRRADHIFIEELRKADWYHKVSQAFVVFQPVKSVGVVGDGRRYAWVVALRAVETIDFMTARWAHLPYELLETVSGRIINEIEGISRVTYDVSSKPPATIEWE</sequence>
<gene>
    <name evidence="1" type="primary">guaA</name>
    <name type="ordered locus">Pfl01_4587</name>
</gene>
<feature type="chain" id="PRO_0000229458" description="GMP synthase [glutamine-hydrolyzing]">
    <location>
        <begin position="1"/>
        <end position="525"/>
    </location>
</feature>
<feature type="domain" description="Glutamine amidotransferase type-1" evidence="1">
    <location>
        <begin position="9"/>
        <end position="207"/>
    </location>
</feature>
<feature type="domain" description="GMPS ATP-PPase" evidence="1">
    <location>
        <begin position="208"/>
        <end position="400"/>
    </location>
</feature>
<feature type="active site" description="Nucleophile" evidence="1">
    <location>
        <position position="86"/>
    </location>
</feature>
<feature type="active site" evidence="1">
    <location>
        <position position="181"/>
    </location>
</feature>
<feature type="active site" evidence="1">
    <location>
        <position position="183"/>
    </location>
</feature>
<feature type="binding site" evidence="1">
    <location>
        <begin position="235"/>
        <end position="241"/>
    </location>
    <ligand>
        <name>ATP</name>
        <dbReference type="ChEBI" id="CHEBI:30616"/>
    </ligand>
</feature>
<organism>
    <name type="scientific">Pseudomonas fluorescens (strain Pf0-1)</name>
    <dbReference type="NCBI Taxonomy" id="205922"/>
    <lineage>
        <taxon>Bacteria</taxon>
        <taxon>Pseudomonadati</taxon>
        <taxon>Pseudomonadota</taxon>
        <taxon>Gammaproteobacteria</taxon>
        <taxon>Pseudomonadales</taxon>
        <taxon>Pseudomonadaceae</taxon>
        <taxon>Pseudomonas</taxon>
    </lineage>
</organism>
<dbReference type="EC" id="6.3.5.2" evidence="1"/>
<dbReference type="EMBL" id="CP000094">
    <property type="protein sequence ID" value="ABA76324.1"/>
    <property type="molecule type" value="Genomic_DNA"/>
</dbReference>
<dbReference type="RefSeq" id="WP_011335797.1">
    <property type="nucleotide sequence ID" value="NC_007492.2"/>
</dbReference>
<dbReference type="SMR" id="Q3K7D0"/>
<dbReference type="MEROPS" id="C26.957"/>
<dbReference type="KEGG" id="pfo:Pfl01_4587"/>
<dbReference type="eggNOG" id="COG0518">
    <property type="taxonomic scope" value="Bacteria"/>
</dbReference>
<dbReference type="eggNOG" id="COG0519">
    <property type="taxonomic scope" value="Bacteria"/>
</dbReference>
<dbReference type="HOGENOM" id="CLU_014340_0_5_6"/>
<dbReference type="UniPathway" id="UPA00189">
    <property type="reaction ID" value="UER00296"/>
</dbReference>
<dbReference type="Proteomes" id="UP000002704">
    <property type="component" value="Chromosome"/>
</dbReference>
<dbReference type="GO" id="GO:0005829">
    <property type="term" value="C:cytosol"/>
    <property type="evidence" value="ECO:0007669"/>
    <property type="project" value="TreeGrafter"/>
</dbReference>
<dbReference type="GO" id="GO:0005524">
    <property type="term" value="F:ATP binding"/>
    <property type="evidence" value="ECO:0007669"/>
    <property type="project" value="UniProtKB-UniRule"/>
</dbReference>
<dbReference type="GO" id="GO:0003921">
    <property type="term" value="F:GMP synthase activity"/>
    <property type="evidence" value="ECO:0007669"/>
    <property type="project" value="InterPro"/>
</dbReference>
<dbReference type="CDD" id="cd01742">
    <property type="entry name" value="GATase1_GMP_Synthase"/>
    <property type="match status" value="1"/>
</dbReference>
<dbReference type="CDD" id="cd01997">
    <property type="entry name" value="GMP_synthase_C"/>
    <property type="match status" value="1"/>
</dbReference>
<dbReference type="FunFam" id="3.30.300.10:FF:000002">
    <property type="entry name" value="GMP synthase [glutamine-hydrolyzing]"/>
    <property type="match status" value="1"/>
</dbReference>
<dbReference type="FunFam" id="3.40.50.620:FF:000001">
    <property type="entry name" value="GMP synthase [glutamine-hydrolyzing]"/>
    <property type="match status" value="1"/>
</dbReference>
<dbReference type="FunFam" id="3.40.50.880:FF:000001">
    <property type="entry name" value="GMP synthase [glutamine-hydrolyzing]"/>
    <property type="match status" value="1"/>
</dbReference>
<dbReference type="Gene3D" id="3.30.300.10">
    <property type="match status" value="1"/>
</dbReference>
<dbReference type="Gene3D" id="3.40.50.880">
    <property type="match status" value="1"/>
</dbReference>
<dbReference type="Gene3D" id="3.40.50.620">
    <property type="entry name" value="HUPs"/>
    <property type="match status" value="1"/>
</dbReference>
<dbReference type="HAMAP" id="MF_00344">
    <property type="entry name" value="GMP_synthase"/>
    <property type="match status" value="1"/>
</dbReference>
<dbReference type="InterPro" id="IPR029062">
    <property type="entry name" value="Class_I_gatase-like"/>
</dbReference>
<dbReference type="InterPro" id="IPR017926">
    <property type="entry name" value="GATASE"/>
</dbReference>
<dbReference type="InterPro" id="IPR001674">
    <property type="entry name" value="GMP_synth_C"/>
</dbReference>
<dbReference type="InterPro" id="IPR004739">
    <property type="entry name" value="GMP_synth_GATase"/>
</dbReference>
<dbReference type="InterPro" id="IPR022955">
    <property type="entry name" value="GMP_synthase"/>
</dbReference>
<dbReference type="InterPro" id="IPR025777">
    <property type="entry name" value="GMPS_ATP_PPase_dom"/>
</dbReference>
<dbReference type="InterPro" id="IPR022310">
    <property type="entry name" value="NAD/GMP_synthase"/>
</dbReference>
<dbReference type="InterPro" id="IPR014729">
    <property type="entry name" value="Rossmann-like_a/b/a_fold"/>
</dbReference>
<dbReference type="NCBIfam" id="TIGR00884">
    <property type="entry name" value="guaA_Cterm"/>
    <property type="match status" value="1"/>
</dbReference>
<dbReference type="NCBIfam" id="TIGR00888">
    <property type="entry name" value="guaA_Nterm"/>
    <property type="match status" value="1"/>
</dbReference>
<dbReference type="NCBIfam" id="NF000848">
    <property type="entry name" value="PRK00074.1"/>
    <property type="match status" value="1"/>
</dbReference>
<dbReference type="PANTHER" id="PTHR11922:SF2">
    <property type="entry name" value="GMP SYNTHASE [GLUTAMINE-HYDROLYZING]"/>
    <property type="match status" value="1"/>
</dbReference>
<dbReference type="PANTHER" id="PTHR11922">
    <property type="entry name" value="GMP SYNTHASE-RELATED"/>
    <property type="match status" value="1"/>
</dbReference>
<dbReference type="Pfam" id="PF00117">
    <property type="entry name" value="GATase"/>
    <property type="match status" value="1"/>
</dbReference>
<dbReference type="Pfam" id="PF00958">
    <property type="entry name" value="GMP_synt_C"/>
    <property type="match status" value="1"/>
</dbReference>
<dbReference type="Pfam" id="PF02540">
    <property type="entry name" value="NAD_synthase"/>
    <property type="match status" value="1"/>
</dbReference>
<dbReference type="PRINTS" id="PR00099">
    <property type="entry name" value="CPSGATASE"/>
</dbReference>
<dbReference type="PRINTS" id="PR00096">
    <property type="entry name" value="GATASE"/>
</dbReference>
<dbReference type="SUPFAM" id="SSF52402">
    <property type="entry name" value="Adenine nucleotide alpha hydrolases-like"/>
    <property type="match status" value="1"/>
</dbReference>
<dbReference type="SUPFAM" id="SSF52317">
    <property type="entry name" value="Class I glutamine amidotransferase-like"/>
    <property type="match status" value="1"/>
</dbReference>
<dbReference type="SUPFAM" id="SSF54810">
    <property type="entry name" value="GMP synthetase C-terminal dimerisation domain"/>
    <property type="match status" value="1"/>
</dbReference>
<dbReference type="PROSITE" id="PS51273">
    <property type="entry name" value="GATASE_TYPE_1"/>
    <property type="match status" value="1"/>
</dbReference>
<dbReference type="PROSITE" id="PS51553">
    <property type="entry name" value="GMPS_ATP_PPASE"/>
    <property type="match status" value="1"/>
</dbReference>
<protein>
    <recommendedName>
        <fullName evidence="1">GMP synthase [glutamine-hydrolyzing]</fullName>
        <ecNumber evidence="1">6.3.5.2</ecNumber>
    </recommendedName>
    <alternativeName>
        <fullName evidence="1">GMP synthetase</fullName>
    </alternativeName>
    <alternativeName>
        <fullName evidence="1">Glutamine amidotransferase</fullName>
    </alternativeName>
</protein>
<reference key="1">
    <citation type="journal article" date="2009" name="Genome Biol.">
        <title>Genomic and genetic analyses of diversity and plant interactions of Pseudomonas fluorescens.</title>
        <authorList>
            <person name="Silby M.W."/>
            <person name="Cerdeno-Tarraga A.M."/>
            <person name="Vernikos G.S."/>
            <person name="Giddens S.R."/>
            <person name="Jackson R.W."/>
            <person name="Preston G.M."/>
            <person name="Zhang X.-X."/>
            <person name="Moon C.D."/>
            <person name="Gehrig S.M."/>
            <person name="Godfrey S.A.C."/>
            <person name="Knight C.G."/>
            <person name="Malone J.G."/>
            <person name="Robinson Z."/>
            <person name="Spiers A.J."/>
            <person name="Harris S."/>
            <person name="Challis G.L."/>
            <person name="Yaxley A.M."/>
            <person name="Harris D."/>
            <person name="Seeger K."/>
            <person name="Murphy L."/>
            <person name="Rutter S."/>
            <person name="Squares R."/>
            <person name="Quail M.A."/>
            <person name="Saunders E."/>
            <person name="Mavromatis K."/>
            <person name="Brettin T.S."/>
            <person name="Bentley S.D."/>
            <person name="Hothersall J."/>
            <person name="Stephens E."/>
            <person name="Thomas C.M."/>
            <person name="Parkhill J."/>
            <person name="Levy S.B."/>
            <person name="Rainey P.B."/>
            <person name="Thomson N.R."/>
        </authorList>
    </citation>
    <scope>NUCLEOTIDE SEQUENCE [LARGE SCALE GENOMIC DNA]</scope>
    <source>
        <strain>Pf0-1</strain>
    </source>
</reference>
<accession>Q3K7D0</accession>
<name>GUAA_PSEPF</name>
<comment type="function">
    <text evidence="1">Catalyzes the synthesis of GMP from XMP.</text>
</comment>
<comment type="catalytic activity">
    <reaction evidence="1">
        <text>XMP + L-glutamine + ATP + H2O = GMP + L-glutamate + AMP + diphosphate + 2 H(+)</text>
        <dbReference type="Rhea" id="RHEA:11680"/>
        <dbReference type="ChEBI" id="CHEBI:15377"/>
        <dbReference type="ChEBI" id="CHEBI:15378"/>
        <dbReference type="ChEBI" id="CHEBI:29985"/>
        <dbReference type="ChEBI" id="CHEBI:30616"/>
        <dbReference type="ChEBI" id="CHEBI:33019"/>
        <dbReference type="ChEBI" id="CHEBI:57464"/>
        <dbReference type="ChEBI" id="CHEBI:58115"/>
        <dbReference type="ChEBI" id="CHEBI:58359"/>
        <dbReference type="ChEBI" id="CHEBI:456215"/>
        <dbReference type="EC" id="6.3.5.2"/>
    </reaction>
</comment>
<comment type="pathway">
    <text evidence="1">Purine metabolism; GMP biosynthesis; GMP from XMP (L-Gln route): step 1/1.</text>
</comment>
<comment type="subunit">
    <text evidence="1">Homodimer.</text>
</comment>